<sequence>MFKQLRPALASLLVLSLVTGVAYPLLVTGIAQLAFPEQANGSLLRDAEGKVLGSRLIAQKFDGEEWFHSRPSAGDYATVSSAASNLAPSNPALAERIARDAAQERIADQGPVPLALVTTSGSGLDPQLPPQAARYQALRVATARGLPLRLVEDLVESHTERPLVGPAVVNVLALNMALAGLKR</sequence>
<name>KDPC_PSEAE</name>
<protein>
    <recommendedName>
        <fullName evidence="1">Potassium-transporting ATPase KdpC subunit</fullName>
    </recommendedName>
    <alternativeName>
        <fullName evidence="1">ATP phosphohydrolase [potassium-transporting] C chain</fullName>
    </alternativeName>
    <alternativeName>
        <fullName evidence="1">Potassium-binding and translocating subunit C</fullName>
    </alternativeName>
    <alternativeName>
        <fullName evidence="1">Potassium-translocating ATPase C chain</fullName>
    </alternativeName>
</protein>
<evidence type="ECO:0000255" key="1">
    <source>
        <dbReference type="HAMAP-Rule" id="MF_00276"/>
    </source>
</evidence>
<gene>
    <name evidence="1" type="primary">kdpC</name>
    <name type="ordered locus">PA1635</name>
</gene>
<organism>
    <name type="scientific">Pseudomonas aeruginosa (strain ATCC 15692 / DSM 22644 / CIP 104116 / JCM 14847 / LMG 12228 / 1C / PRS 101 / PAO1)</name>
    <dbReference type="NCBI Taxonomy" id="208964"/>
    <lineage>
        <taxon>Bacteria</taxon>
        <taxon>Pseudomonadati</taxon>
        <taxon>Pseudomonadota</taxon>
        <taxon>Gammaproteobacteria</taxon>
        <taxon>Pseudomonadales</taxon>
        <taxon>Pseudomonadaceae</taxon>
        <taxon>Pseudomonas</taxon>
    </lineage>
</organism>
<dbReference type="EMBL" id="AE004091">
    <property type="protein sequence ID" value="AAG05024.1"/>
    <property type="molecule type" value="Genomic_DNA"/>
</dbReference>
<dbReference type="PIR" id="B83441">
    <property type="entry name" value="B83441"/>
</dbReference>
<dbReference type="RefSeq" id="NP_250326.1">
    <property type="nucleotide sequence ID" value="NC_002516.2"/>
</dbReference>
<dbReference type="RefSeq" id="WP_003087529.1">
    <property type="nucleotide sequence ID" value="NZ_QZGE01000003.1"/>
</dbReference>
<dbReference type="SMR" id="P57686"/>
<dbReference type="FunCoup" id="P57686">
    <property type="interactions" value="278"/>
</dbReference>
<dbReference type="STRING" id="208964.PA1635"/>
<dbReference type="PaxDb" id="208964-PA1635"/>
<dbReference type="GeneID" id="883003"/>
<dbReference type="KEGG" id="pae:PA1635"/>
<dbReference type="PATRIC" id="fig|208964.12.peg.1695"/>
<dbReference type="PseudoCAP" id="PA1635"/>
<dbReference type="HOGENOM" id="CLU_077094_2_0_6"/>
<dbReference type="InParanoid" id="P57686"/>
<dbReference type="OrthoDB" id="9788285at2"/>
<dbReference type="PhylomeDB" id="P57686"/>
<dbReference type="BioCyc" id="PAER208964:G1FZ6-1665-MONOMER"/>
<dbReference type="Proteomes" id="UP000002438">
    <property type="component" value="Chromosome"/>
</dbReference>
<dbReference type="GO" id="GO:0005886">
    <property type="term" value="C:plasma membrane"/>
    <property type="evidence" value="ECO:0007669"/>
    <property type="project" value="UniProtKB-SubCell"/>
</dbReference>
<dbReference type="GO" id="GO:0005524">
    <property type="term" value="F:ATP binding"/>
    <property type="evidence" value="ECO:0007669"/>
    <property type="project" value="UniProtKB-UniRule"/>
</dbReference>
<dbReference type="GO" id="GO:0008556">
    <property type="term" value="F:P-type potassium transmembrane transporter activity"/>
    <property type="evidence" value="ECO:0000318"/>
    <property type="project" value="GO_Central"/>
</dbReference>
<dbReference type="GO" id="GO:0071805">
    <property type="term" value="P:potassium ion transmembrane transport"/>
    <property type="evidence" value="ECO:0000318"/>
    <property type="project" value="GO_Central"/>
</dbReference>
<dbReference type="HAMAP" id="MF_00276">
    <property type="entry name" value="KdpC"/>
    <property type="match status" value="1"/>
</dbReference>
<dbReference type="InterPro" id="IPR003820">
    <property type="entry name" value="KdpC"/>
</dbReference>
<dbReference type="NCBIfam" id="TIGR00681">
    <property type="entry name" value="kdpC"/>
    <property type="match status" value="1"/>
</dbReference>
<dbReference type="NCBIfam" id="NF001454">
    <property type="entry name" value="PRK00315.1"/>
    <property type="match status" value="1"/>
</dbReference>
<dbReference type="PANTHER" id="PTHR30042">
    <property type="entry name" value="POTASSIUM-TRANSPORTING ATPASE C CHAIN"/>
    <property type="match status" value="1"/>
</dbReference>
<dbReference type="PANTHER" id="PTHR30042:SF2">
    <property type="entry name" value="POTASSIUM-TRANSPORTING ATPASE KDPC SUBUNIT"/>
    <property type="match status" value="1"/>
</dbReference>
<dbReference type="Pfam" id="PF02669">
    <property type="entry name" value="KdpC"/>
    <property type="match status" value="1"/>
</dbReference>
<dbReference type="PIRSF" id="PIRSF001296">
    <property type="entry name" value="K_ATPase_KdpC"/>
    <property type="match status" value="1"/>
</dbReference>
<comment type="function">
    <text evidence="1">Part of the high-affinity ATP-driven potassium transport (or Kdp) system, which catalyzes the hydrolysis of ATP coupled with the electrogenic transport of potassium into the cytoplasm. This subunit acts as a catalytic chaperone that increases the ATP-binding affinity of the ATP-hydrolyzing subunit KdpB by the formation of a transient KdpB/KdpC/ATP ternary complex.</text>
</comment>
<comment type="subunit">
    <text evidence="1">The system is composed of three essential subunits: KdpA, KdpB and KdpC.</text>
</comment>
<comment type="subcellular location">
    <subcellularLocation>
        <location evidence="1">Cell inner membrane</location>
        <topology evidence="1">Single-pass membrane protein</topology>
    </subcellularLocation>
</comment>
<comment type="similarity">
    <text evidence="1">Belongs to the KdpC family.</text>
</comment>
<reference key="1">
    <citation type="journal article" date="2000" name="Nature">
        <title>Complete genome sequence of Pseudomonas aeruginosa PAO1, an opportunistic pathogen.</title>
        <authorList>
            <person name="Stover C.K."/>
            <person name="Pham X.-Q.T."/>
            <person name="Erwin A.L."/>
            <person name="Mizoguchi S.D."/>
            <person name="Warrener P."/>
            <person name="Hickey M.J."/>
            <person name="Brinkman F.S.L."/>
            <person name="Hufnagle W.O."/>
            <person name="Kowalik D.J."/>
            <person name="Lagrou M."/>
            <person name="Garber R.L."/>
            <person name="Goltry L."/>
            <person name="Tolentino E."/>
            <person name="Westbrock-Wadman S."/>
            <person name="Yuan Y."/>
            <person name="Brody L.L."/>
            <person name="Coulter S.N."/>
            <person name="Folger K.R."/>
            <person name="Kas A."/>
            <person name="Larbig K."/>
            <person name="Lim R.M."/>
            <person name="Smith K.A."/>
            <person name="Spencer D.H."/>
            <person name="Wong G.K.-S."/>
            <person name="Wu Z."/>
            <person name="Paulsen I.T."/>
            <person name="Reizer J."/>
            <person name="Saier M.H. Jr."/>
            <person name="Hancock R.E.W."/>
            <person name="Lory S."/>
            <person name="Olson M.V."/>
        </authorList>
    </citation>
    <scope>NUCLEOTIDE SEQUENCE [LARGE SCALE GENOMIC DNA]</scope>
    <source>
        <strain>ATCC 15692 / DSM 22644 / CIP 104116 / JCM 14847 / LMG 12228 / 1C / PRS 101 / PAO1</strain>
    </source>
</reference>
<accession>P57686</accession>
<keyword id="KW-0067">ATP-binding</keyword>
<keyword id="KW-0997">Cell inner membrane</keyword>
<keyword id="KW-1003">Cell membrane</keyword>
<keyword id="KW-0406">Ion transport</keyword>
<keyword id="KW-0472">Membrane</keyword>
<keyword id="KW-0547">Nucleotide-binding</keyword>
<keyword id="KW-0630">Potassium</keyword>
<keyword id="KW-0633">Potassium transport</keyword>
<keyword id="KW-1185">Reference proteome</keyword>
<keyword id="KW-0812">Transmembrane</keyword>
<keyword id="KW-1133">Transmembrane helix</keyword>
<keyword id="KW-0813">Transport</keyword>
<feature type="chain" id="PRO_0000197001" description="Potassium-transporting ATPase KdpC subunit">
    <location>
        <begin position="1"/>
        <end position="183"/>
    </location>
</feature>
<feature type="transmembrane region" description="Helical" evidence="1">
    <location>
        <begin position="10"/>
        <end position="30"/>
    </location>
</feature>
<proteinExistence type="inferred from homology"/>